<name>C3H24_ORYSJ</name>
<dbReference type="EMBL" id="AC097368">
    <property type="protein sequence ID" value="AAO38462.1"/>
    <property type="status" value="ALT_INIT"/>
    <property type="molecule type" value="Genomic_DNA"/>
</dbReference>
<dbReference type="EMBL" id="DP000009">
    <property type="protein sequence ID" value="ABF98372.1"/>
    <property type="molecule type" value="Genomic_DNA"/>
</dbReference>
<dbReference type="EMBL" id="AP008209">
    <property type="protein sequence ID" value="BAF12896.1"/>
    <property type="molecule type" value="Genomic_DNA"/>
</dbReference>
<dbReference type="EMBL" id="AP014959">
    <property type="protein sequence ID" value="BAS85899.1"/>
    <property type="molecule type" value="Genomic_DNA"/>
</dbReference>
<dbReference type="EMBL" id="AK120638">
    <property type="protein sequence ID" value="BAH00104.1"/>
    <property type="molecule type" value="mRNA"/>
</dbReference>
<dbReference type="RefSeq" id="XP_015632054.1">
    <property type="nucleotide sequence ID" value="XM_015776568.1"/>
</dbReference>
<dbReference type="SMR" id="Q10EL1"/>
<dbReference type="FunCoup" id="Q10EL1">
    <property type="interactions" value="693"/>
</dbReference>
<dbReference type="STRING" id="39947.Q10EL1"/>
<dbReference type="PaxDb" id="39947-Q10EL1"/>
<dbReference type="EnsemblPlants" id="Os03t0698800-01">
    <property type="protein sequence ID" value="Os03t0698800-01"/>
    <property type="gene ID" value="Os03g0698800"/>
</dbReference>
<dbReference type="Gramene" id="Os03t0698800-01">
    <property type="protein sequence ID" value="Os03t0698800-01"/>
    <property type="gene ID" value="Os03g0698800"/>
</dbReference>
<dbReference type="KEGG" id="dosa:Os03g0698800"/>
<dbReference type="eggNOG" id="KOG1595">
    <property type="taxonomic scope" value="Eukaryota"/>
</dbReference>
<dbReference type="HOGENOM" id="CLU_015068_1_0_1"/>
<dbReference type="InParanoid" id="Q10EL1"/>
<dbReference type="OMA" id="PGMNNSE"/>
<dbReference type="OrthoDB" id="410307at2759"/>
<dbReference type="Proteomes" id="UP000000763">
    <property type="component" value="Chromosome 3"/>
</dbReference>
<dbReference type="Proteomes" id="UP000059680">
    <property type="component" value="Chromosome 3"/>
</dbReference>
<dbReference type="GO" id="GO:0003677">
    <property type="term" value="F:DNA binding"/>
    <property type="evidence" value="ECO:0007669"/>
    <property type="project" value="UniProtKB-KW"/>
</dbReference>
<dbReference type="GO" id="GO:0008270">
    <property type="term" value="F:zinc ion binding"/>
    <property type="evidence" value="ECO:0007669"/>
    <property type="project" value="UniProtKB-KW"/>
</dbReference>
<dbReference type="GO" id="GO:0010468">
    <property type="term" value="P:regulation of gene expression"/>
    <property type="evidence" value="ECO:0007669"/>
    <property type="project" value="UniProtKB-ARBA"/>
</dbReference>
<dbReference type="FunFam" id="3.30.1370.210:FF:000009">
    <property type="entry name" value="Zinc finger CCCH domain-containing protein 66"/>
    <property type="match status" value="1"/>
</dbReference>
<dbReference type="Gene3D" id="3.30.1370.210">
    <property type="match status" value="1"/>
</dbReference>
<dbReference type="Gene3D" id="1.25.40.20">
    <property type="entry name" value="Ankyrin repeat-containing domain"/>
    <property type="match status" value="1"/>
</dbReference>
<dbReference type="InterPro" id="IPR002110">
    <property type="entry name" value="Ankyrin_rpt"/>
</dbReference>
<dbReference type="InterPro" id="IPR036770">
    <property type="entry name" value="Ankyrin_rpt-contain_sf"/>
</dbReference>
<dbReference type="InterPro" id="IPR045234">
    <property type="entry name" value="Unkempt-like"/>
</dbReference>
<dbReference type="InterPro" id="IPR000571">
    <property type="entry name" value="Znf_CCCH"/>
</dbReference>
<dbReference type="PANTHER" id="PTHR14493">
    <property type="entry name" value="UNKEMPT FAMILY MEMBER"/>
    <property type="match status" value="1"/>
</dbReference>
<dbReference type="PANTHER" id="PTHR14493:SF153">
    <property type="entry name" value="ZINC FINGER CCCH DOMAIN-CONTAINING PROTEIN 24"/>
    <property type="match status" value="1"/>
</dbReference>
<dbReference type="Pfam" id="PF12796">
    <property type="entry name" value="Ank_2"/>
    <property type="match status" value="1"/>
</dbReference>
<dbReference type="Pfam" id="PF00642">
    <property type="entry name" value="zf-CCCH"/>
    <property type="match status" value="1"/>
</dbReference>
<dbReference type="Pfam" id="PF25512">
    <property type="entry name" value="zf-CCCH_AtC3H23"/>
    <property type="match status" value="1"/>
</dbReference>
<dbReference type="PRINTS" id="PR01415">
    <property type="entry name" value="ANKYRIN"/>
</dbReference>
<dbReference type="SMART" id="SM00248">
    <property type="entry name" value="ANK"/>
    <property type="match status" value="2"/>
</dbReference>
<dbReference type="SMART" id="SM00356">
    <property type="entry name" value="ZnF_C3H1"/>
    <property type="match status" value="2"/>
</dbReference>
<dbReference type="SUPFAM" id="SSF48403">
    <property type="entry name" value="Ankyrin repeat"/>
    <property type="match status" value="1"/>
</dbReference>
<dbReference type="PROSITE" id="PS50297">
    <property type="entry name" value="ANK_REP_REGION"/>
    <property type="match status" value="1"/>
</dbReference>
<dbReference type="PROSITE" id="PS50088">
    <property type="entry name" value="ANK_REPEAT"/>
    <property type="match status" value="1"/>
</dbReference>
<dbReference type="PROSITE" id="PS50103">
    <property type="entry name" value="ZF_C3H1"/>
    <property type="match status" value="1"/>
</dbReference>
<feature type="chain" id="PRO_0000346820" description="Zinc finger CCCH domain-containing protein 24">
    <location>
        <begin position="1"/>
        <end position="764"/>
    </location>
</feature>
<feature type="repeat" description="ANK 1">
    <location>
        <begin position="108"/>
        <end position="138"/>
    </location>
</feature>
<feature type="repeat" description="ANK 2">
    <location>
        <begin position="143"/>
        <end position="175"/>
    </location>
</feature>
<feature type="zinc finger region" description="C3H1-type" evidence="1">
    <location>
        <begin position="321"/>
        <end position="348"/>
    </location>
</feature>
<feature type="region of interest" description="Disordered" evidence="2">
    <location>
        <begin position="616"/>
        <end position="665"/>
    </location>
</feature>
<feature type="region of interest" description="Disordered" evidence="2">
    <location>
        <begin position="698"/>
        <end position="732"/>
    </location>
</feature>
<feature type="compositionally biased region" description="Low complexity" evidence="2">
    <location>
        <begin position="640"/>
        <end position="659"/>
    </location>
</feature>
<feature type="compositionally biased region" description="Polar residues" evidence="2">
    <location>
        <begin position="705"/>
        <end position="716"/>
    </location>
</feature>
<comment type="sequence caution" evidence="3">
    <conflict type="erroneous initiation">
        <sequence resource="EMBL-CDS" id="AAO38462"/>
    </conflict>
</comment>
<reference key="1">
    <citation type="journal article" date="2005" name="Genome Res.">
        <title>Sequence, annotation, and analysis of synteny between rice chromosome 3 and diverged grass species.</title>
        <authorList>
            <consortium name="The rice chromosome 3 sequencing consortium"/>
            <person name="Buell C.R."/>
            <person name="Yuan Q."/>
            <person name="Ouyang S."/>
            <person name="Liu J."/>
            <person name="Zhu W."/>
            <person name="Wang A."/>
            <person name="Maiti R."/>
            <person name="Haas B."/>
            <person name="Wortman J."/>
            <person name="Pertea M."/>
            <person name="Jones K.M."/>
            <person name="Kim M."/>
            <person name="Overton L."/>
            <person name="Tsitrin T."/>
            <person name="Fadrosh D."/>
            <person name="Bera J."/>
            <person name="Weaver B."/>
            <person name="Jin S."/>
            <person name="Johri S."/>
            <person name="Reardon M."/>
            <person name="Webb K."/>
            <person name="Hill J."/>
            <person name="Moffat K."/>
            <person name="Tallon L."/>
            <person name="Van Aken S."/>
            <person name="Lewis M."/>
            <person name="Utterback T."/>
            <person name="Feldblyum T."/>
            <person name="Zismann V."/>
            <person name="Iobst S."/>
            <person name="Hsiao J."/>
            <person name="de Vazeille A.R."/>
            <person name="Salzberg S.L."/>
            <person name="White O."/>
            <person name="Fraser C.M."/>
            <person name="Yu Y."/>
            <person name="Kim H."/>
            <person name="Rambo T."/>
            <person name="Currie J."/>
            <person name="Collura K."/>
            <person name="Kernodle-Thompson S."/>
            <person name="Wei F."/>
            <person name="Kudrna K."/>
            <person name="Ammiraju J.S.S."/>
            <person name="Luo M."/>
            <person name="Goicoechea J.L."/>
            <person name="Wing R.A."/>
            <person name="Henry D."/>
            <person name="Oates R."/>
            <person name="Palmer M."/>
            <person name="Pries G."/>
            <person name="Saski C."/>
            <person name="Simmons J."/>
            <person name="Soderlund C."/>
            <person name="Nelson W."/>
            <person name="de la Bastide M."/>
            <person name="Spiegel L."/>
            <person name="Nascimento L."/>
            <person name="Huang E."/>
            <person name="Preston R."/>
            <person name="Zutavern T."/>
            <person name="Palmer L."/>
            <person name="O'Shaughnessy A."/>
            <person name="Dike S."/>
            <person name="McCombie W.R."/>
            <person name="Minx P."/>
            <person name="Cordum H."/>
            <person name="Wilson R."/>
            <person name="Jin W."/>
            <person name="Lee H.R."/>
            <person name="Jiang J."/>
            <person name="Jackson S."/>
        </authorList>
    </citation>
    <scope>NUCLEOTIDE SEQUENCE [LARGE SCALE GENOMIC DNA]</scope>
    <source>
        <strain>cv. Nipponbare</strain>
    </source>
</reference>
<reference key="2">
    <citation type="journal article" date="2005" name="Nature">
        <title>The map-based sequence of the rice genome.</title>
        <authorList>
            <consortium name="International rice genome sequencing project (IRGSP)"/>
        </authorList>
    </citation>
    <scope>NUCLEOTIDE SEQUENCE [LARGE SCALE GENOMIC DNA]</scope>
    <source>
        <strain>cv. Nipponbare</strain>
    </source>
</reference>
<reference key="3">
    <citation type="journal article" date="2008" name="Nucleic Acids Res.">
        <title>The rice annotation project database (RAP-DB): 2008 update.</title>
        <authorList>
            <consortium name="The rice annotation project (RAP)"/>
        </authorList>
    </citation>
    <scope>GENOME REANNOTATION</scope>
    <source>
        <strain>cv. Nipponbare</strain>
    </source>
</reference>
<reference key="4">
    <citation type="journal article" date="2013" name="Rice">
        <title>Improvement of the Oryza sativa Nipponbare reference genome using next generation sequence and optical map data.</title>
        <authorList>
            <person name="Kawahara Y."/>
            <person name="de la Bastide M."/>
            <person name="Hamilton J.P."/>
            <person name="Kanamori H."/>
            <person name="McCombie W.R."/>
            <person name="Ouyang S."/>
            <person name="Schwartz D.C."/>
            <person name="Tanaka T."/>
            <person name="Wu J."/>
            <person name="Zhou S."/>
            <person name="Childs K.L."/>
            <person name="Davidson R.M."/>
            <person name="Lin H."/>
            <person name="Quesada-Ocampo L."/>
            <person name="Vaillancourt B."/>
            <person name="Sakai H."/>
            <person name="Lee S.S."/>
            <person name="Kim J."/>
            <person name="Numa H."/>
            <person name="Itoh T."/>
            <person name="Buell C.R."/>
            <person name="Matsumoto T."/>
        </authorList>
    </citation>
    <scope>GENOME REANNOTATION</scope>
    <source>
        <strain>cv. Nipponbare</strain>
    </source>
</reference>
<reference key="5">
    <citation type="journal article" date="2003" name="Science">
        <title>Collection, mapping, and annotation of over 28,000 cDNA clones from japonica rice.</title>
        <authorList>
            <consortium name="The rice full-length cDNA consortium"/>
        </authorList>
    </citation>
    <scope>NUCLEOTIDE SEQUENCE [LARGE SCALE MRNA]</scope>
    <source>
        <strain>cv. Nipponbare</strain>
    </source>
</reference>
<reference key="6">
    <citation type="journal article" date="2008" name="BMC Genomics">
        <title>Genome-wide analysis of CCCH zinc finger family in Arabidopsis and rice.</title>
        <authorList>
            <person name="Wang D."/>
            <person name="Guo Y."/>
            <person name="Wu C."/>
            <person name="Yang G."/>
            <person name="Li Y."/>
            <person name="Zheng C."/>
        </authorList>
    </citation>
    <scope>NOMENCLATURE</scope>
</reference>
<organism>
    <name type="scientific">Oryza sativa subsp. japonica</name>
    <name type="common">Rice</name>
    <dbReference type="NCBI Taxonomy" id="39947"/>
    <lineage>
        <taxon>Eukaryota</taxon>
        <taxon>Viridiplantae</taxon>
        <taxon>Streptophyta</taxon>
        <taxon>Embryophyta</taxon>
        <taxon>Tracheophyta</taxon>
        <taxon>Spermatophyta</taxon>
        <taxon>Magnoliopsida</taxon>
        <taxon>Liliopsida</taxon>
        <taxon>Poales</taxon>
        <taxon>Poaceae</taxon>
        <taxon>BOP clade</taxon>
        <taxon>Oryzoideae</taxon>
        <taxon>Oryzeae</taxon>
        <taxon>Oryzinae</taxon>
        <taxon>Oryza</taxon>
        <taxon>Oryza sativa</taxon>
    </lineage>
</organism>
<protein>
    <recommendedName>
        <fullName>Zinc finger CCCH domain-containing protein 24</fullName>
        <shortName>OsC3H24</shortName>
    </recommendedName>
</protein>
<evidence type="ECO:0000255" key="1">
    <source>
        <dbReference type="PROSITE-ProRule" id="PRU00723"/>
    </source>
</evidence>
<evidence type="ECO:0000256" key="2">
    <source>
        <dbReference type="SAM" id="MobiDB-lite"/>
    </source>
</evidence>
<evidence type="ECO:0000305" key="3"/>
<gene>
    <name type="ordered locus">Os03g0698800</name>
    <name type="ordered locus">LOC_Os03g49170</name>
    <name type="ORF">OSJNBb0017F17.19</name>
</gene>
<proteinExistence type="evidence at transcript level"/>
<accession>Q10EL1</accession>
<accession>B7F656</accession>
<accession>Q851S4</accession>
<keyword id="KW-0040">ANK repeat</keyword>
<keyword id="KW-0238">DNA-binding</keyword>
<keyword id="KW-0479">Metal-binding</keyword>
<keyword id="KW-1185">Reference proteome</keyword>
<keyword id="KW-0677">Repeat</keyword>
<keyword id="KW-0862">Zinc</keyword>
<keyword id="KW-0863">Zinc-finger</keyword>
<sequence length="764" mass="81044">MFLLMASVLPIRQAPMNGTPISASAAAGVDGVGAAVALAAATKKSAAAAAAVAEMAKTLTVDTDDAFAGLLELAADDDAEGLRRALERAPPAAADEAGLWYGRRKVLEHRTPLMVAATYGSLAVLRLLLSLPSVDVNRRCGSDGTTALHCAASGGSPSCVEAVKLLLAAGADADATDASGYRPADVISVPPKMFDAKIALQDLLGCPKAGHGVLRVVTRAANSMLSPVSSPTAEDARSPSAAVMMTTKFADLPRVVTSEKKEYPVDPSLPDIKNSIYASDEFRMYSFKIRPCSRAYSHDWTECPFVHPGENARRRDPRKYHYSCVPCPDFRKGVCRRGDMCEYAHGVFECWLHPAQYRTRLCKDGTSCNRRVCFFAHTTDELRPLYVSTGSAVPSPRASATATMEMAAAMGLMPGSPSSVSAVMSPFTPPMSPSGNGMPPSLGWQQPNVPTLHLPGSSLQSSRLRTSLSARDMPADDYSLMQDIDSQLINDLCYSRIGSSTGNHTSRTKSLNPSNLDDLFSAEMVSSPRYSNADQGGMFSPSHKAAFLNQFQQQQQALLSPINTVFSPKSVDNQQLPSHSSLLQASLGISSPGRMSPRCVESGSPMNSHLAAALAQREKQQQTMRSLSSRDLGPSAARASGVVGSPLSSSWSKWGSPSGTPDWGVNGEELGKLRRSSSFELRSGGDDPDLSWVHTLVKESPPEKQVTTAESINSVGPSPLMPPSVSNGEGPSLNAPLDGHDQAAVIGALLEQMQLDQHIGSLAT</sequence>